<evidence type="ECO:0000255" key="1">
    <source>
        <dbReference type="HAMAP-Rule" id="MF_00494"/>
    </source>
</evidence>
<keyword id="KW-0963">Cytoplasm</keyword>
<keyword id="KW-0570">Pentose shunt</keyword>
<keyword id="KW-1185">Reference proteome</keyword>
<keyword id="KW-0704">Schiff base</keyword>
<keyword id="KW-0808">Transferase</keyword>
<sequence length="214" mass="23453">MEIFLDTANIEEIKKGASLGIISGVTTNPSLIAREGRDLKEVVMEIVSLIDGPISAEVISLDYEGMVREAEELSKLHPNITIKIPMTWDGIRAVKTLSSMGIKTNVTLVFSANQALLAALAGATFVSPFVGRLDDTGHDGVYLIEEIKTIYENYNFKTKIIAASIRHPLHVTQVAKAGADIATVPFKVLTQMFAHPQTKEGIEKFLADWQAMKR</sequence>
<dbReference type="EC" id="2.2.1.2" evidence="1"/>
<dbReference type="EMBL" id="CP000141">
    <property type="protein sequence ID" value="ABB14561.1"/>
    <property type="molecule type" value="Genomic_DNA"/>
</dbReference>
<dbReference type="RefSeq" id="WP_011343077.1">
    <property type="nucleotide sequence ID" value="NC_007503.1"/>
</dbReference>
<dbReference type="SMR" id="Q3AFT3"/>
<dbReference type="FunCoup" id="Q3AFT3">
    <property type="interactions" value="280"/>
</dbReference>
<dbReference type="STRING" id="246194.CHY_0129"/>
<dbReference type="KEGG" id="chy:CHY_0129"/>
<dbReference type="eggNOG" id="COG0176">
    <property type="taxonomic scope" value="Bacteria"/>
</dbReference>
<dbReference type="HOGENOM" id="CLU_079764_0_0_9"/>
<dbReference type="InParanoid" id="Q3AFT3"/>
<dbReference type="OrthoDB" id="9807051at2"/>
<dbReference type="UniPathway" id="UPA00115">
    <property type="reaction ID" value="UER00414"/>
</dbReference>
<dbReference type="Proteomes" id="UP000002706">
    <property type="component" value="Chromosome"/>
</dbReference>
<dbReference type="GO" id="GO:0005737">
    <property type="term" value="C:cytoplasm"/>
    <property type="evidence" value="ECO:0007669"/>
    <property type="project" value="UniProtKB-SubCell"/>
</dbReference>
<dbReference type="GO" id="GO:0016832">
    <property type="term" value="F:aldehyde-lyase activity"/>
    <property type="evidence" value="ECO:0007669"/>
    <property type="project" value="InterPro"/>
</dbReference>
<dbReference type="GO" id="GO:0004801">
    <property type="term" value="F:transaldolase activity"/>
    <property type="evidence" value="ECO:0007669"/>
    <property type="project" value="UniProtKB-UniRule"/>
</dbReference>
<dbReference type="GO" id="GO:0005975">
    <property type="term" value="P:carbohydrate metabolic process"/>
    <property type="evidence" value="ECO:0007669"/>
    <property type="project" value="InterPro"/>
</dbReference>
<dbReference type="GO" id="GO:0006098">
    <property type="term" value="P:pentose-phosphate shunt"/>
    <property type="evidence" value="ECO:0007669"/>
    <property type="project" value="UniProtKB-UniRule"/>
</dbReference>
<dbReference type="CDD" id="cd00956">
    <property type="entry name" value="Transaldolase_FSA"/>
    <property type="match status" value="1"/>
</dbReference>
<dbReference type="FunFam" id="3.20.20.70:FF:000018">
    <property type="entry name" value="Probable transaldolase"/>
    <property type="match status" value="1"/>
</dbReference>
<dbReference type="Gene3D" id="3.20.20.70">
    <property type="entry name" value="Aldolase class I"/>
    <property type="match status" value="1"/>
</dbReference>
<dbReference type="HAMAP" id="MF_00494">
    <property type="entry name" value="Transaldolase_3b"/>
    <property type="match status" value="1"/>
</dbReference>
<dbReference type="InterPro" id="IPR013785">
    <property type="entry name" value="Aldolase_TIM"/>
</dbReference>
<dbReference type="InterPro" id="IPR001585">
    <property type="entry name" value="TAL/FSA"/>
</dbReference>
<dbReference type="InterPro" id="IPR022999">
    <property type="entry name" value="Transaldolase_3B"/>
</dbReference>
<dbReference type="InterPro" id="IPR004731">
    <property type="entry name" value="Transaldolase_3B/F6P_aldolase"/>
</dbReference>
<dbReference type="InterPro" id="IPR018225">
    <property type="entry name" value="Transaldolase_AS"/>
</dbReference>
<dbReference type="InterPro" id="IPR033919">
    <property type="entry name" value="TSA/FSA_arc/bac"/>
</dbReference>
<dbReference type="NCBIfam" id="TIGR00875">
    <property type="entry name" value="fsa_talC_mipB"/>
    <property type="match status" value="1"/>
</dbReference>
<dbReference type="PANTHER" id="PTHR10683:SF40">
    <property type="entry name" value="FRUCTOSE-6-PHOSPHATE ALDOLASE 1-RELATED"/>
    <property type="match status" value="1"/>
</dbReference>
<dbReference type="PANTHER" id="PTHR10683">
    <property type="entry name" value="TRANSALDOLASE"/>
    <property type="match status" value="1"/>
</dbReference>
<dbReference type="Pfam" id="PF00923">
    <property type="entry name" value="TAL_FSA"/>
    <property type="match status" value="1"/>
</dbReference>
<dbReference type="SUPFAM" id="SSF51569">
    <property type="entry name" value="Aldolase"/>
    <property type="match status" value="1"/>
</dbReference>
<dbReference type="PROSITE" id="PS01054">
    <property type="entry name" value="TRANSALDOLASE_1"/>
    <property type="match status" value="1"/>
</dbReference>
<dbReference type="PROSITE" id="PS00958">
    <property type="entry name" value="TRANSALDOLASE_2"/>
    <property type="match status" value="1"/>
</dbReference>
<organism>
    <name type="scientific">Carboxydothermus hydrogenoformans (strain ATCC BAA-161 / DSM 6008 / Z-2901)</name>
    <dbReference type="NCBI Taxonomy" id="246194"/>
    <lineage>
        <taxon>Bacteria</taxon>
        <taxon>Bacillati</taxon>
        <taxon>Bacillota</taxon>
        <taxon>Clostridia</taxon>
        <taxon>Thermoanaerobacterales</taxon>
        <taxon>Thermoanaerobacteraceae</taxon>
        <taxon>Carboxydothermus</taxon>
    </lineage>
</organism>
<comment type="function">
    <text evidence="1">Transaldolase is important for the balance of metabolites in the pentose-phosphate pathway.</text>
</comment>
<comment type="catalytic activity">
    <reaction evidence="1">
        <text>D-sedoheptulose 7-phosphate + D-glyceraldehyde 3-phosphate = D-erythrose 4-phosphate + beta-D-fructose 6-phosphate</text>
        <dbReference type="Rhea" id="RHEA:17053"/>
        <dbReference type="ChEBI" id="CHEBI:16897"/>
        <dbReference type="ChEBI" id="CHEBI:57483"/>
        <dbReference type="ChEBI" id="CHEBI:57634"/>
        <dbReference type="ChEBI" id="CHEBI:59776"/>
        <dbReference type="EC" id="2.2.1.2"/>
    </reaction>
</comment>
<comment type="pathway">
    <text evidence="1">Carbohydrate degradation; pentose phosphate pathway; D-glyceraldehyde 3-phosphate and beta-D-fructose 6-phosphate from D-ribose 5-phosphate and D-xylulose 5-phosphate (non-oxidative stage): step 2/3.</text>
</comment>
<comment type="subcellular location">
    <subcellularLocation>
        <location evidence="1">Cytoplasm</location>
    </subcellularLocation>
</comment>
<comment type="similarity">
    <text evidence="1">Belongs to the transaldolase family. Type 3B subfamily.</text>
</comment>
<gene>
    <name evidence="1" type="primary">tal</name>
    <name type="ordered locus">CHY_0129</name>
</gene>
<protein>
    <recommendedName>
        <fullName evidence="1">Probable transaldolase</fullName>
        <ecNumber evidence="1">2.2.1.2</ecNumber>
    </recommendedName>
</protein>
<name>TAL_CARHZ</name>
<feature type="chain" id="PRO_1000126285" description="Probable transaldolase">
    <location>
        <begin position="1"/>
        <end position="214"/>
    </location>
</feature>
<feature type="active site" description="Schiff-base intermediate with substrate" evidence="1">
    <location>
        <position position="83"/>
    </location>
</feature>
<proteinExistence type="inferred from homology"/>
<accession>Q3AFT3</accession>
<reference key="1">
    <citation type="journal article" date="2005" name="PLoS Genet.">
        <title>Life in hot carbon monoxide: the complete genome sequence of Carboxydothermus hydrogenoformans Z-2901.</title>
        <authorList>
            <person name="Wu M."/>
            <person name="Ren Q."/>
            <person name="Durkin A.S."/>
            <person name="Daugherty S.C."/>
            <person name="Brinkac L.M."/>
            <person name="Dodson R.J."/>
            <person name="Madupu R."/>
            <person name="Sullivan S.A."/>
            <person name="Kolonay J.F."/>
            <person name="Nelson W.C."/>
            <person name="Tallon L.J."/>
            <person name="Jones K.M."/>
            <person name="Ulrich L.E."/>
            <person name="Gonzalez J.M."/>
            <person name="Zhulin I.B."/>
            <person name="Robb F.T."/>
            <person name="Eisen J.A."/>
        </authorList>
    </citation>
    <scope>NUCLEOTIDE SEQUENCE [LARGE SCALE GENOMIC DNA]</scope>
    <source>
        <strain>ATCC BAA-161 / DSM 6008 / Z-2901</strain>
    </source>
</reference>